<organism>
    <name type="scientific">Yersinia pseudotuberculosis serotype O:3 (strain YPIII)</name>
    <dbReference type="NCBI Taxonomy" id="502800"/>
    <lineage>
        <taxon>Bacteria</taxon>
        <taxon>Pseudomonadati</taxon>
        <taxon>Pseudomonadota</taxon>
        <taxon>Gammaproteobacteria</taxon>
        <taxon>Enterobacterales</taxon>
        <taxon>Yersiniaceae</taxon>
        <taxon>Yersinia</taxon>
    </lineage>
</organism>
<sequence>MKILVDENMPYAEELFRRLGDVQAVPGRPIPRDALVDADALMVRSVTKVNEALLHGTSIGFVGTATAGTDHVDDTWLRQQGIGFSAAPGCNAIAVVEYVFSALMMMAERDGFQLRDKTVGIIGVGNVGSRLNARLQALGVRTLLCDPPRADRGDNEAFWPLEKLVREADVLTFHTPLNKTGAYQSLHMADDELLAALPDGRILINACRGAVVDNAALLRALEKGKKLSVVLDVWEPEPDLSLPLLARVDIGTPHIAGYTLEGKARGTTQVFEAFSQHLGQPQSVELASLLPVPEFSHLRLNGELDEGKLKRLMHLVYDVRRDDAPLRHVAGLPGEFDRLRKHYQERREWSSLCVQCDDATSAGLLQQLGFTTQLL</sequence>
<accession>B1JGI0</accession>
<name>PDXB_YERPY</name>
<proteinExistence type="inferred from homology"/>
<protein>
    <recommendedName>
        <fullName evidence="1">Erythronate-4-phosphate dehydrogenase</fullName>
        <ecNumber evidence="1">1.1.1.290</ecNumber>
    </recommendedName>
</protein>
<gene>
    <name evidence="1" type="primary">pdxB</name>
    <name type="ordered locus">YPK_1527</name>
</gene>
<keyword id="KW-0963">Cytoplasm</keyword>
<keyword id="KW-0520">NAD</keyword>
<keyword id="KW-0560">Oxidoreductase</keyword>
<keyword id="KW-0664">Pyridoxine biosynthesis</keyword>
<evidence type="ECO:0000255" key="1">
    <source>
        <dbReference type="HAMAP-Rule" id="MF_01825"/>
    </source>
</evidence>
<dbReference type="EC" id="1.1.1.290" evidence="1"/>
<dbReference type="EMBL" id="CP000950">
    <property type="protein sequence ID" value="ACA67820.1"/>
    <property type="molecule type" value="Genomic_DNA"/>
</dbReference>
<dbReference type="RefSeq" id="WP_002209725.1">
    <property type="nucleotide sequence ID" value="NZ_CP009792.1"/>
</dbReference>
<dbReference type="SMR" id="B1JGI0"/>
<dbReference type="GeneID" id="57975926"/>
<dbReference type="KEGG" id="ypy:YPK_1527"/>
<dbReference type="PATRIC" id="fig|502800.11.peg.2168"/>
<dbReference type="UniPathway" id="UPA00244">
    <property type="reaction ID" value="UER00310"/>
</dbReference>
<dbReference type="GO" id="GO:0005829">
    <property type="term" value="C:cytosol"/>
    <property type="evidence" value="ECO:0007669"/>
    <property type="project" value="TreeGrafter"/>
</dbReference>
<dbReference type="GO" id="GO:0033711">
    <property type="term" value="F:4-phosphoerythronate dehydrogenase activity"/>
    <property type="evidence" value="ECO:0007669"/>
    <property type="project" value="UniProtKB-EC"/>
</dbReference>
<dbReference type="GO" id="GO:0051287">
    <property type="term" value="F:NAD binding"/>
    <property type="evidence" value="ECO:0007669"/>
    <property type="project" value="InterPro"/>
</dbReference>
<dbReference type="GO" id="GO:0046983">
    <property type="term" value="F:protein dimerization activity"/>
    <property type="evidence" value="ECO:0007669"/>
    <property type="project" value="InterPro"/>
</dbReference>
<dbReference type="GO" id="GO:0036001">
    <property type="term" value="P:'de novo' pyridoxal 5'-phosphate biosynthetic process"/>
    <property type="evidence" value="ECO:0007669"/>
    <property type="project" value="TreeGrafter"/>
</dbReference>
<dbReference type="GO" id="GO:0008615">
    <property type="term" value="P:pyridoxine biosynthetic process"/>
    <property type="evidence" value="ECO:0007669"/>
    <property type="project" value="UniProtKB-UniRule"/>
</dbReference>
<dbReference type="CDD" id="cd12158">
    <property type="entry name" value="ErythrP_dh"/>
    <property type="match status" value="1"/>
</dbReference>
<dbReference type="FunFam" id="3.30.1370.170:FF:000001">
    <property type="entry name" value="Erythronate-4-phosphate dehydrogenase"/>
    <property type="match status" value="1"/>
</dbReference>
<dbReference type="FunFam" id="3.40.50.720:FF:000093">
    <property type="entry name" value="Erythronate-4-phosphate dehydrogenase"/>
    <property type="match status" value="1"/>
</dbReference>
<dbReference type="Gene3D" id="3.30.1370.170">
    <property type="match status" value="1"/>
</dbReference>
<dbReference type="Gene3D" id="3.40.50.720">
    <property type="entry name" value="NAD(P)-binding Rossmann-like Domain"/>
    <property type="match status" value="2"/>
</dbReference>
<dbReference type="HAMAP" id="MF_01825">
    <property type="entry name" value="PdxB"/>
    <property type="match status" value="1"/>
</dbReference>
<dbReference type="InterPro" id="IPR006139">
    <property type="entry name" value="D-isomer_2_OHA_DH_cat_dom"/>
</dbReference>
<dbReference type="InterPro" id="IPR029753">
    <property type="entry name" value="D-isomer_DH_CS"/>
</dbReference>
<dbReference type="InterPro" id="IPR029752">
    <property type="entry name" value="D-isomer_DH_CS1"/>
</dbReference>
<dbReference type="InterPro" id="IPR006140">
    <property type="entry name" value="D-isomer_DH_NAD-bd"/>
</dbReference>
<dbReference type="InterPro" id="IPR020921">
    <property type="entry name" value="Erythronate-4-P_DHase"/>
</dbReference>
<dbReference type="InterPro" id="IPR024531">
    <property type="entry name" value="Erythronate-4-P_DHase_dimer"/>
</dbReference>
<dbReference type="InterPro" id="IPR036291">
    <property type="entry name" value="NAD(P)-bd_dom_sf"/>
</dbReference>
<dbReference type="InterPro" id="IPR038251">
    <property type="entry name" value="PdxB_dimer_sf"/>
</dbReference>
<dbReference type="NCBIfam" id="NF001309">
    <property type="entry name" value="PRK00257.1"/>
    <property type="match status" value="1"/>
</dbReference>
<dbReference type="PANTHER" id="PTHR42938">
    <property type="entry name" value="FORMATE DEHYDROGENASE 1"/>
    <property type="match status" value="1"/>
</dbReference>
<dbReference type="PANTHER" id="PTHR42938:SF9">
    <property type="entry name" value="FORMATE DEHYDROGENASE 1"/>
    <property type="match status" value="1"/>
</dbReference>
<dbReference type="Pfam" id="PF00389">
    <property type="entry name" value="2-Hacid_dh"/>
    <property type="match status" value="1"/>
</dbReference>
<dbReference type="Pfam" id="PF02826">
    <property type="entry name" value="2-Hacid_dh_C"/>
    <property type="match status" value="1"/>
</dbReference>
<dbReference type="Pfam" id="PF11890">
    <property type="entry name" value="DUF3410"/>
    <property type="match status" value="1"/>
</dbReference>
<dbReference type="SUPFAM" id="SSF52283">
    <property type="entry name" value="Formate/glycerate dehydrogenase catalytic domain-like"/>
    <property type="match status" value="1"/>
</dbReference>
<dbReference type="SUPFAM" id="SSF51735">
    <property type="entry name" value="NAD(P)-binding Rossmann-fold domains"/>
    <property type="match status" value="1"/>
</dbReference>
<dbReference type="PROSITE" id="PS00065">
    <property type="entry name" value="D_2_HYDROXYACID_DH_1"/>
    <property type="match status" value="1"/>
</dbReference>
<dbReference type="PROSITE" id="PS00671">
    <property type="entry name" value="D_2_HYDROXYACID_DH_3"/>
    <property type="match status" value="1"/>
</dbReference>
<comment type="function">
    <text evidence="1">Catalyzes the oxidation of erythronate-4-phosphate to 3-hydroxy-2-oxo-4-phosphonooxybutanoate.</text>
</comment>
<comment type="catalytic activity">
    <reaction evidence="1">
        <text>4-phospho-D-erythronate + NAD(+) = (R)-3-hydroxy-2-oxo-4-phosphooxybutanoate + NADH + H(+)</text>
        <dbReference type="Rhea" id="RHEA:18829"/>
        <dbReference type="ChEBI" id="CHEBI:15378"/>
        <dbReference type="ChEBI" id="CHEBI:57540"/>
        <dbReference type="ChEBI" id="CHEBI:57945"/>
        <dbReference type="ChEBI" id="CHEBI:58538"/>
        <dbReference type="ChEBI" id="CHEBI:58766"/>
        <dbReference type="EC" id="1.1.1.290"/>
    </reaction>
</comment>
<comment type="pathway">
    <text evidence="1">Cofactor biosynthesis; pyridoxine 5'-phosphate biosynthesis; pyridoxine 5'-phosphate from D-erythrose 4-phosphate: step 2/5.</text>
</comment>
<comment type="subunit">
    <text evidence="1">Homodimer.</text>
</comment>
<comment type="subcellular location">
    <subcellularLocation>
        <location evidence="1">Cytoplasm</location>
    </subcellularLocation>
</comment>
<comment type="similarity">
    <text evidence="1">Belongs to the D-isomer specific 2-hydroxyacid dehydrogenase family. PdxB subfamily.</text>
</comment>
<feature type="chain" id="PRO_1000188290" description="Erythronate-4-phosphate dehydrogenase">
    <location>
        <begin position="1"/>
        <end position="375"/>
    </location>
</feature>
<feature type="active site" evidence="1">
    <location>
        <position position="208"/>
    </location>
</feature>
<feature type="active site" evidence="1">
    <location>
        <position position="237"/>
    </location>
</feature>
<feature type="active site" description="Proton donor" evidence="1">
    <location>
        <position position="254"/>
    </location>
</feature>
<feature type="binding site" evidence="1">
    <location>
        <position position="45"/>
    </location>
    <ligand>
        <name>substrate</name>
    </ligand>
</feature>
<feature type="binding site" evidence="1">
    <location>
        <position position="66"/>
    </location>
    <ligand>
        <name>substrate</name>
    </ligand>
</feature>
<feature type="binding site" evidence="1">
    <location>
        <position position="146"/>
    </location>
    <ligand>
        <name>NAD(+)</name>
        <dbReference type="ChEBI" id="CHEBI:57540"/>
    </ligand>
</feature>
<feature type="binding site" evidence="1">
    <location>
        <position position="175"/>
    </location>
    <ligand>
        <name>NAD(+)</name>
        <dbReference type="ChEBI" id="CHEBI:57540"/>
    </ligand>
</feature>
<feature type="binding site" evidence="1">
    <location>
        <position position="232"/>
    </location>
    <ligand>
        <name>NAD(+)</name>
        <dbReference type="ChEBI" id="CHEBI:57540"/>
    </ligand>
</feature>
<feature type="binding site" evidence="1">
    <location>
        <position position="257"/>
    </location>
    <ligand>
        <name>NAD(+)</name>
        <dbReference type="ChEBI" id="CHEBI:57540"/>
    </ligand>
</feature>
<feature type="binding site" evidence="1">
    <location>
        <position position="258"/>
    </location>
    <ligand>
        <name>substrate</name>
    </ligand>
</feature>
<reference key="1">
    <citation type="submission" date="2008-02" db="EMBL/GenBank/DDBJ databases">
        <title>Complete sequence of Yersinia pseudotuberculosis YPIII.</title>
        <authorList>
            <consortium name="US DOE Joint Genome Institute"/>
            <person name="Copeland A."/>
            <person name="Lucas S."/>
            <person name="Lapidus A."/>
            <person name="Glavina del Rio T."/>
            <person name="Dalin E."/>
            <person name="Tice H."/>
            <person name="Bruce D."/>
            <person name="Goodwin L."/>
            <person name="Pitluck S."/>
            <person name="Munk A.C."/>
            <person name="Brettin T."/>
            <person name="Detter J.C."/>
            <person name="Han C."/>
            <person name="Tapia R."/>
            <person name="Schmutz J."/>
            <person name="Larimer F."/>
            <person name="Land M."/>
            <person name="Hauser L."/>
            <person name="Challacombe J.F."/>
            <person name="Green L."/>
            <person name="Lindler L.E."/>
            <person name="Nikolich M.P."/>
            <person name="Richardson P."/>
        </authorList>
    </citation>
    <scope>NUCLEOTIDE SEQUENCE [LARGE SCALE GENOMIC DNA]</scope>
    <source>
        <strain>YPIII</strain>
    </source>
</reference>